<accession>P03013</accession>
<evidence type="ECO:0000255" key="1">
    <source>
        <dbReference type="PROSITE-ProRule" id="PRU01072"/>
    </source>
</evidence>
<evidence type="ECO:0000305" key="2"/>
<evidence type="ECO:0007829" key="3">
    <source>
        <dbReference type="PDB" id="1JJ6"/>
    </source>
</evidence>
<evidence type="ECO:0007829" key="4">
    <source>
        <dbReference type="PDB" id="1JKO"/>
    </source>
</evidence>
<reference key="1">
    <citation type="journal article" date="1980" name="Proc. Natl. Acad. Sci. U.S.A.">
        <title>Analysis of the nucleotide sequence of an invertible controlling element.</title>
        <authorList>
            <person name="Zieg J."/>
            <person name="Simon M."/>
        </authorList>
    </citation>
    <scope>NUCLEOTIDE SEQUENCE [GENOMIC DNA]</scope>
</reference>
<reference key="2">
    <citation type="journal article" date="1981" name="Cold Spring Harb. Symp. Quant. Biol.">
        <title>Analysis of the functional components of the phase variation system.</title>
        <authorList>
            <person name="Silverman M."/>
            <person name="Zieg J."/>
            <person name="Mandel G."/>
            <person name="Simon M."/>
        </authorList>
    </citation>
    <scope>NUCLEOTIDE SEQUENCE [GENOMIC DNA]</scope>
</reference>
<reference key="3">
    <citation type="journal article" date="1980" name="Science">
        <title>Phase variation: evolution of a controlling element.</title>
        <authorList>
            <person name="Simon M."/>
            <person name="Zieg J."/>
            <person name="Silverman M."/>
            <person name="Mandel G."/>
            <person name="Doolittle R."/>
        </authorList>
    </citation>
    <scope>NUCLEOTIDE SEQUENCE [GENOMIC DNA]</scope>
</reference>
<reference key="4">
    <citation type="journal article" date="2001" name="Nature">
        <title>Complete genome sequence of Salmonella enterica serovar Typhimurium LT2.</title>
        <authorList>
            <person name="McClelland M."/>
            <person name="Sanderson K.E."/>
            <person name="Spieth J."/>
            <person name="Clifton S.W."/>
            <person name="Latreille P."/>
            <person name="Courtney L."/>
            <person name="Porwollik S."/>
            <person name="Ali J."/>
            <person name="Dante M."/>
            <person name="Du F."/>
            <person name="Hou S."/>
            <person name="Layman D."/>
            <person name="Leonard S."/>
            <person name="Nguyen C."/>
            <person name="Scott K."/>
            <person name="Holmes A."/>
            <person name="Grewal N."/>
            <person name="Mulvaney E."/>
            <person name="Ryan E."/>
            <person name="Sun H."/>
            <person name="Florea L."/>
            <person name="Miller W."/>
            <person name="Stoneking T."/>
            <person name="Nhan M."/>
            <person name="Waterston R."/>
            <person name="Wilson R.K."/>
        </authorList>
    </citation>
    <scope>NUCLEOTIDE SEQUENCE [LARGE SCALE GENOMIC DNA]</scope>
    <source>
        <strain>LT2 / SGSC1412 / ATCC 700720</strain>
    </source>
</reference>
<reference key="5">
    <citation type="journal article" date="1994" name="Science">
        <title>Hin recombinase bound to DNA: the origin of specificity in major and minor groove interactions.</title>
        <authorList>
            <person name="Feng J.-A."/>
            <person name="Johnson R.C."/>
            <person name="Dickerson R.E."/>
        </authorList>
    </citation>
    <scope>X-RAY CRYSTALLOGRAPHY (2.3 ANGSTROMS) OF 139-190</scope>
</reference>
<reference key="6">
    <citation type="journal article" date="1990" name="Science">
        <title>The Hin invertasome: protein-mediated joining of distant recombination sites at the enhancer.</title>
        <authorList>
            <person name="Heichman K.A."/>
            <person name="Johnson R.C."/>
        </authorList>
    </citation>
    <scope>REVIEW</scope>
</reference>
<comment type="function">
    <text>A DNA fragment of approximately 900 base pairs, adjacent to the fljB (H2) gene, which specifies the synthesis of phase-2 flagellin, can exist in either orientation with respect to fljB. The orientation of the inversion region controls expression of fljB. The hin gene occupies about two-thirds of the inversion region; it is required for the inversion of the fljB controlling region.</text>
</comment>
<comment type="similarity">
    <text evidence="2">Belongs to the site-specific recombinase resolvase family.</text>
</comment>
<sequence>MATIGYIRVSTIDQNIDLQRNALTSANCDRIFEDRISGKIANRPGLKRALKYVNKGDTLVVWKLDRLGRSVKNLVALISELHERGAHFHSLTDSIDTSSAMGRFFFHVMSALAEMERELIVERTLAGLAAARAQGRLGGRPRAINKHEQEQISRLLEKGHPRQQLAIIFGIGVSTLYRYFPASRIKKRMN</sequence>
<protein>
    <recommendedName>
        <fullName>DNA-invertase hin</fullName>
    </recommendedName>
</protein>
<dbReference type="EMBL" id="J01801">
    <property type="protein sequence ID" value="AAA27073.1"/>
    <property type="molecule type" value="Genomic_DNA"/>
</dbReference>
<dbReference type="EMBL" id="V01370">
    <property type="protein sequence ID" value="CAA24654.1"/>
    <property type="molecule type" value="Genomic_DNA"/>
</dbReference>
<dbReference type="EMBL" id="AH000941">
    <property type="protein sequence ID" value="AAA27140.1"/>
    <property type="molecule type" value="Genomic_DNA"/>
</dbReference>
<dbReference type="EMBL" id="AE006468">
    <property type="protein sequence ID" value="AAL21658.1"/>
    <property type="molecule type" value="Genomic_DNA"/>
</dbReference>
<dbReference type="PIR" id="A03544">
    <property type="entry name" value="JWEBT"/>
</dbReference>
<dbReference type="RefSeq" id="NP_461699.1">
    <property type="nucleotide sequence ID" value="NC_003197.2"/>
</dbReference>
<dbReference type="RefSeq" id="WP_000190912.1">
    <property type="nucleotide sequence ID" value="NC_003197.2"/>
</dbReference>
<dbReference type="PDB" id="1HCR">
    <property type="method" value="X-ray"/>
    <property type="resolution" value="2.30 A"/>
    <property type="chains" value="A=139-190"/>
</dbReference>
<dbReference type="PDB" id="1IJW">
    <property type="method" value="X-ray"/>
    <property type="resolution" value="2.40 A"/>
    <property type="chains" value="C=139-190"/>
</dbReference>
<dbReference type="PDB" id="1JJ6">
    <property type="method" value="X-ray"/>
    <property type="resolution" value="2.30 A"/>
    <property type="chains" value="C=139-190"/>
</dbReference>
<dbReference type="PDB" id="1JJ8">
    <property type="method" value="X-ray"/>
    <property type="resolution" value="2.75 A"/>
    <property type="chains" value="C=139-190"/>
</dbReference>
<dbReference type="PDB" id="1JKO">
    <property type="method" value="X-ray"/>
    <property type="resolution" value="2.24 A"/>
    <property type="chains" value="C=139-190"/>
</dbReference>
<dbReference type="PDB" id="1JKP">
    <property type="method" value="X-ray"/>
    <property type="resolution" value="2.80 A"/>
    <property type="chains" value="C=139-190"/>
</dbReference>
<dbReference type="PDB" id="1JKQ">
    <property type="method" value="X-ray"/>
    <property type="resolution" value="2.86 A"/>
    <property type="chains" value="C=139-190"/>
</dbReference>
<dbReference type="PDB" id="1JKR">
    <property type="method" value="X-ray"/>
    <property type="resolution" value="2.28 A"/>
    <property type="chains" value="C=139-190"/>
</dbReference>
<dbReference type="PDBsum" id="1HCR"/>
<dbReference type="PDBsum" id="1IJW"/>
<dbReference type="PDBsum" id="1JJ6"/>
<dbReference type="PDBsum" id="1JJ8"/>
<dbReference type="PDBsum" id="1JKO"/>
<dbReference type="PDBsum" id="1JKP"/>
<dbReference type="PDBsum" id="1JKQ"/>
<dbReference type="PDBsum" id="1JKR"/>
<dbReference type="SMR" id="P03013"/>
<dbReference type="STRING" id="99287.STM2772"/>
<dbReference type="PaxDb" id="99287-STM2772"/>
<dbReference type="GeneID" id="1254295"/>
<dbReference type="KEGG" id="stm:STM2772"/>
<dbReference type="PATRIC" id="fig|99287.12.peg.2924"/>
<dbReference type="HOGENOM" id="CLU_010686_8_0_6"/>
<dbReference type="OMA" id="INRHEQE"/>
<dbReference type="PhylomeDB" id="P03013"/>
<dbReference type="BioCyc" id="SENT99287:STM2772-MONOMER"/>
<dbReference type="EvolutionaryTrace" id="P03013"/>
<dbReference type="Proteomes" id="UP000001014">
    <property type="component" value="Chromosome"/>
</dbReference>
<dbReference type="GO" id="GO:0003677">
    <property type="term" value="F:DNA binding"/>
    <property type="evidence" value="ECO:0007669"/>
    <property type="project" value="UniProtKB-KW"/>
</dbReference>
<dbReference type="GO" id="GO:0000150">
    <property type="term" value="F:DNA strand exchange activity"/>
    <property type="evidence" value="ECO:0000318"/>
    <property type="project" value="GO_Central"/>
</dbReference>
<dbReference type="GO" id="GO:0015074">
    <property type="term" value="P:DNA integration"/>
    <property type="evidence" value="ECO:0007669"/>
    <property type="project" value="UniProtKB-KW"/>
</dbReference>
<dbReference type="GO" id="GO:0006310">
    <property type="term" value="P:DNA recombination"/>
    <property type="evidence" value="ECO:0000318"/>
    <property type="project" value="GO_Central"/>
</dbReference>
<dbReference type="CDD" id="cd00569">
    <property type="entry name" value="HTH_Hin_like"/>
    <property type="match status" value="1"/>
</dbReference>
<dbReference type="CDD" id="cd03768">
    <property type="entry name" value="SR_ResInv"/>
    <property type="match status" value="1"/>
</dbReference>
<dbReference type="FunFam" id="3.40.50.1390:FF:000001">
    <property type="entry name" value="DNA recombinase"/>
    <property type="match status" value="1"/>
</dbReference>
<dbReference type="Gene3D" id="1.10.10.60">
    <property type="entry name" value="Homeodomain-like"/>
    <property type="match status" value="1"/>
</dbReference>
<dbReference type="Gene3D" id="3.40.50.1390">
    <property type="entry name" value="Resolvase, N-terminal catalytic domain"/>
    <property type="match status" value="1"/>
</dbReference>
<dbReference type="InterPro" id="IPR009057">
    <property type="entry name" value="Homeodomain-like_sf"/>
</dbReference>
<dbReference type="InterPro" id="IPR006118">
    <property type="entry name" value="Recombinase_CS"/>
</dbReference>
<dbReference type="InterPro" id="IPR006119">
    <property type="entry name" value="Resolv_N"/>
</dbReference>
<dbReference type="InterPro" id="IPR036162">
    <property type="entry name" value="Resolvase-like_N_sf"/>
</dbReference>
<dbReference type="InterPro" id="IPR006120">
    <property type="entry name" value="Resolvase_HTH_dom"/>
</dbReference>
<dbReference type="InterPro" id="IPR050639">
    <property type="entry name" value="SSR_resolvase"/>
</dbReference>
<dbReference type="PANTHER" id="PTHR30461">
    <property type="entry name" value="DNA-INVERTASE FROM LAMBDOID PROPHAGE"/>
    <property type="match status" value="1"/>
</dbReference>
<dbReference type="PANTHER" id="PTHR30461:SF2">
    <property type="entry name" value="SERINE RECOMBINASE PINE-RELATED"/>
    <property type="match status" value="1"/>
</dbReference>
<dbReference type="Pfam" id="PF02796">
    <property type="entry name" value="HTH_7"/>
    <property type="match status" value="1"/>
</dbReference>
<dbReference type="Pfam" id="PF00239">
    <property type="entry name" value="Resolvase"/>
    <property type="match status" value="1"/>
</dbReference>
<dbReference type="SMART" id="SM00857">
    <property type="entry name" value="Resolvase"/>
    <property type="match status" value="1"/>
</dbReference>
<dbReference type="SUPFAM" id="SSF46689">
    <property type="entry name" value="Homeodomain-like"/>
    <property type="match status" value="1"/>
</dbReference>
<dbReference type="SUPFAM" id="SSF53041">
    <property type="entry name" value="Resolvase-like"/>
    <property type="match status" value="1"/>
</dbReference>
<dbReference type="PROSITE" id="PS00397">
    <property type="entry name" value="RECOMBINASES_1"/>
    <property type="match status" value="1"/>
</dbReference>
<dbReference type="PROSITE" id="PS00398">
    <property type="entry name" value="RECOMBINASES_2"/>
    <property type="match status" value="1"/>
</dbReference>
<dbReference type="PROSITE" id="PS51736">
    <property type="entry name" value="RECOMBINASES_3"/>
    <property type="match status" value="1"/>
</dbReference>
<keyword id="KW-0002">3D-structure</keyword>
<keyword id="KW-0229">DNA integration</keyword>
<keyword id="KW-0230">DNA invertase</keyword>
<keyword id="KW-0233">DNA recombination</keyword>
<keyword id="KW-0238">DNA-binding</keyword>
<keyword id="KW-1185">Reference proteome</keyword>
<gene>
    <name type="primary">hin</name>
    <name type="ordered locus">STM2772</name>
</gene>
<proteinExistence type="evidence at protein level"/>
<organism>
    <name type="scientific">Salmonella typhimurium (strain LT2 / SGSC1412 / ATCC 700720)</name>
    <dbReference type="NCBI Taxonomy" id="99287"/>
    <lineage>
        <taxon>Bacteria</taxon>
        <taxon>Pseudomonadati</taxon>
        <taxon>Pseudomonadota</taxon>
        <taxon>Gammaproteobacteria</taxon>
        <taxon>Enterobacterales</taxon>
        <taxon>Enterobacteriaceae</taxon>
        <taxon>Salmonella</taxon>
    </lineage>
</organism>
<name>HIN_SALTY</name>
<feature type="chain" id="PRO_0000196359" description="DNA-invertase hin">
    <location>
        <begin position="1"/>
        <end position="190"/>
    </location>
</feature>
<feature type="domain" description="Resolvase/invertase-type recombinase catalytic" evidence="1">
    <location>
        <begin position="2"/>
        <end position="135"/>
    </location>
</feature>
<feature type="DNA-binding region" description="H-T-H motif">
    <location>
        <begin position="162"/>
        <end position="181"/>
    </location>
</feature>
<feature type="active site" description="O-(5'-phospho-DNA)-serine intermediate" evidence="1">
    <location>
        <position position="10"/>
    </location>
</feature>
<feature type="sequence conflict" description="In Ref. 1, 2 and 3." evidence="2" ref="1 2 3">
    <original>R</original>
    <variation>S</variation>
    <location>
        <position position="184"/>
    </location>
</feature>
<feature type="helix" evidence="4">
    <location>
        <begin position="148"/>
        <end position="157"/>
    </location>
</feature>
<feature type="helix" evidence="4">
    <location>
        <begin position="162"/>
        <end position="167"/>
    </location>
</feature>
<feature type="helix" evidence="4">
    <location>
        <begin position="173"/>
        <end position="179"/>
    </location>
</feature>
<feature type="helix" evidence="3">
    <location>
        <begin position="182"/>
        <end position="184"/>
    </location>
</feature>